<accession>Q8DIQ1</accession>
<accession>Q9F1M3</accession>
<dbReference type="EMBL" id="AB052566">
    <property type="protein sequence ID" value="BAB19261.1"/>
    <property type="molecule type" value="Genomic_DNA"/>
</dbReference>
<dbReference type="EMBL" id="BA000039">
    <property type="protein sequence ID" value="BAC09082.1"/>
    <property type="molecule type" value="Genomic_DNA"/>
</dbReference>
<dbReference type="RefSeq" id="NP_682320.1">
    <property type="nucleotide sequence ID" value="NC_004113.1"/>
</dbReference>
<dbReference type="RefSeq" id="WP_011057370.1">
    <property type="nucleotide sequence ID" value="NC_004113.1"/>
</dbReference>
<dbReference type="PDB" id="1S5L">
    <property type="method" value="X-ray"/>
    <property type="resolution" value="3.50 A"/>
    <property type="chains" value="B/b=1-510"/>
</dbReference>
<dbReference type="PDB" id="1W5C">
    <property type="method" value="X-ray"/>
    <property type="resolution" value="3.20 A"/>
    <property type="chains" value="B/H=1-510"/>
</dbReference>
<dbReference type="PDB" id="2AXT">
    <property type="method" value="X-ray"/>
    <property type="resolution" value="3.00 A"/>
    <property type="chains" value="B/b=1-510"/>
</dbReference>
<dbReference type="PDB" id="3KZI">
    <property type="method" value="X-ray"/>
    <property type="resolution" value="3.60 A"/>
    <property type="chains" value="B=1-510"/>
</dbReference>
<dbReference type="PDB" id="4FBY">
    <property type="method" value="X-ray"/>
    <property type="resolution" value="6.56 A"/>
    <property type="chains" value="B/N=1-510"/>
</dbReference>
<dbReference type="PDB" id="4IXQ">
    <property type="method" value="X-ray"/>
    <property type="resolution" value="5.70 A"/>
    <property type="chains" value="B/b=1-510"/>
</dbReference>
<dbReference type="PDB" id="4IXR">
    <property type="method" value="X-ray"/>
    <property type="resolution" value="5.90 A"/>
    <property type="chains" value="B/b=1-510"/>
</dbReference>
<dbReference type="PDB" id="4PBU">
    <property type="method" value="X-ray"/>
    <property type="resolution" value="5.00 A"/>
    <property type="chains" value="B/b=2-505"/>
</dbReference>
<dbReference type="PDB" id="4PJ0">
    <property type="method" value="X-ray"/>
    <property type="resolution" value="2.44 A"/>
    <property type="chains" value="B/b=1-510"/>
</dbReference>
<dbReference type="PDB" id="4RVY">
    <property type="method" value="X-ray"/>
    <property type="resolution" value="5.50 A"/>
    <property type="chains" value="B/b=2-505"/>
</dbReference>
<dbReference type="PDB" id="4TNH">
    <property type="method" value="X-ray"/>
    <property type="resolution" value="4.90 A"/>
    <property type="chains" value="B/b=1-510"/>
</dbReference>
<dbReference type="PDB" id="4TNI">
    <property type="method" value="X-ray"/>
    <property type="resolution" value="4.60 A"/>
    <property type="chains" value="B/b=1-510"/>
</dbReference>
<dbReference type="PDB" id="4TNJ">
    <property type="method" value="X-ray"/>
    <property type="resolution" value="4.50 A"/>
    <property type="chains" value="B/b=1-510"/>
</dbReference>
<dbReference type="PDB" id="4TNK">
    <property type="method" value="X-ray"/>
    <property type="resolution" value="5.20 A"/>
    <property type="chains" value="B/b=1-510"/>
</dbReference>
<dbReference type="PDB" id="4V62">
    <property type="method" value="X-ray"/>
    <property type="resolution" value="2.90 A"/>
    <property type="chains" value="AB/BB=1-510"/>
</dbReference>
<dbReference type="PDB" id="4V82">
    <property type="method" value="X-ray"/>
    <property type="resolution" value="3.20 A"/>
    <property type="chains" value="AB/BB=1-510"/>
</dbReference>
<dbReference type="PDB" id="5E79">
    <property type="method" value="X-ray"/>
    <property type="resolution" value="3.50 A"/>
    <property type="chains" value="B/b=2-505"/>
</dbReference>
<dbReference type="PDB" id="5E7C">
    <property type="method" value="X-ray"/>
    <property type="resolution" value="4.50 A"/>
    <property type="chains" value="B/b=2-505"/>
</dbReference>
<dbReference type="PDB" id="5H2F">
    <property type="method" value="X-ray"/>
    <property type="resolution" value="2.20 A"/>
    <property type="chains" value="B/b=2-506"/>
</dbReference>
<dbReference type="PDB" id="5KAF">
    <property type="method" value="X-ray"/>
    <property type="resolution" value="3.00 A"/>
    <property type="chains" value="B/b=1-510"/>
</dbReference>
<dbReference type="PDB" id="5KAI">
    <property type="method" value="X-ray"/>
    <property type="resolution" value="2.80 A"/>
    <property type="chains" value="B/b=1-510"/>
</dbReference>
<dbReference type="PDB" id="5MX2">
    <property type="method" value="X-ray"/>
    <property type="resolution" value="2.20 A"/>
    <property type="chains" value="B/b=1-510"/>
</dbReference>
<dbReference type="PDB" id="5TIS">
    <property type="method" value="X-ray"/>
    <property type="resolution" value="2.25 A"/>
    <property type="chains" value="B/b=1-510"/>
</dbReference>
<dbReference type="PDB" id="5ZZN">
    <property type="method" value="X-ray"/>
    <property type="resolution" value="2.10 A"/>
    <property type="chains" value="B/b=2-506"/>
</dbReference>
<dbReference type="PDB" id="6DHE">
    <property type="method" value="X-ray"/>
    <property type="resolution" value="2.05 A"/>
    <property type="chains" value="B/b=2-506"/>
</dbReference>
<dbReference type="PDB" id="6DHF">
    <property type="method" value="X-ray"/>
    <property type="resolution" value="2.08 A"/>
    <property type="chains" value="B/b=2-506"/>
</dbReference>
<dbReference type="PDB" id="6DHG">
    <property type="method" value="X-ray"/>
    <property type="resolution" value="2.50 A"/>
    <property type="chains" value="B/b=2-506"/>
</dbReference>
<dbReference type="PDB" id="6DHH">
    <property type="method" value="X-ray"/>
    <property type="resolution" value="2.20 A"/>
    <property type="chains" value="B/b=2-506"/>
</dbReference>
<dbReference type="PDB" id="6DHO">
    <property type="method" value="X-ray"/>
    <property type="resolution" value="2.07 A"/>
    <property type="chains" value="B/b=2-506"/>
</dbReference>
<dbReference type="PDB" id="6DHP">
    <property type="method" value="X-ray"/>
    <property type="resolution" value="2.04 A"/>
    <property type="chains" value="B/b=2-506"/>
</dbReference>
<dbReference type="PDB" id="6W1O">
    <property type="method" value="X-ray"/>
    <property type="resolution" value="2.08 A"/>
    <property type="chains" value="B/b=1-506"/>
</dbReference>
<dbReference type="PDB" id="6W1P">
    <property type="method" value="X-ray"/>
    <property type="resolution" value="2.26 A"/>
    <property type="chains" value="B/b=1-506"/>
</dbReference>
<dbReference type="PDB" id="6W1Q">
    <property type="method" value="X-ray"/>
    <property type="resolution" value="2.27 A"/>
    <property type="chains" value="B/b=1-506"/>
</dbReference>
<dbReference type="PDB" id="6W1R">
    <property type="method" value="X-ray"/>
    <property type="resolution" value="2.23 A"/>
    <property type="chains" value="B/b=1-506"/>
</dbReference>
<dbReference type="PDB" id="6W1T">
    <property type="method" value="X-ray"/>
    <property type="resolution" value="2.01 A"/>
    <property type="chains" value="B/b=1-506"/>
</dbReference>
<dbReference type="PDB" id="6W1U">
    <property type="method" value="X-ray"/>
    <property type="resolution" value="2.09 A"/>
    <property type="chains" value="B/b=1-510"/>
</dbReference>
<dbReference type="PDB" id="6W1V">
    <property type="method" value="X-ray"/>
    <property type="resolution" value="2.09 A"/>
    <property type="chains" value="B/b=1-510"/>
</dbReference>
<dbReference type="PDB" id="7NHO">
    <property type="method" value="EM"/>
    <property type="resolution" value="2.66 A"/>
    <property type="chains" value="B=1-510"/>
</dbReference>
<dbReference type="PDB" id="7NHP">
    <property type="method" value="EM"/>
    <property type="resolution" value="2.72 A"/>
    <property type="chains" value="B=1-510"/>
</dbReference>
<dbReference type="PDB" id="7NHQ">
    <property type="method" value="EM"/>
    <property type="resolution" value="2.68 A"/>
    <property type="chains" value="B=1-510"/>
</dbReference>
<dbReference type="PDB" id="7RF1">
    <property type="method" value="X-ray"/>
    <property type="resolution" value="1.89 A"/>
    <property type="chains" value="B/b=1-510"/>
</dbReference>
<dbReference type="PDB" id="7RF2">
    <property type="method" value="X-ray"/>
    <property type="resolution" value="2.08 A"/>
    <property type="chains" value="B/b=1-510"/>
</dbReference>
<dbReference type="PDB" id="7RF3">
    <property type="method" value="X-ray"/>
    <property type="resolution" value="2.26 A"/>
    <property type="chains" value="B/b=1-510"/>
</dbReference>
<dbReference type="PDB" id="7RF4">
    <property type="method" value="X-ray"/>
    <property type="resolution" value="2.27 A"/>
    <property type="chains" value="B/b=1-510"/>
</dbReference>
<dbReference type="PDB" id="7RF5">
    <property type="method" value="X-ray"/>
    <property type="resolution" value="2.23 A"/>
    <property type="chains" value="B/b=1-510"/>
</dbReference>
<dbReference type="PDB" id="7RF6">
    <property type="method" value="X-ray"/>
    <property type="resolution" value="2.01 A"/>
    <property type="chains" value="B/b=1-510"/>
</dbReference>
<dbReference type="PDB" id="7RF7">
    <property type="method" value="X-ray"/>
    <property type="resolution" value="2.09 A"/>
    <property type="chains" value="B/b=1-510"/>
</dbReference>
<dbReference type="PDB" id="7RF8">
    <property type="method" value="X-ray"/>
    <property type="resolution" value="2.09 A"/>
    <property type="chains" value="B/b=1-510"/>
</dbReference>
<dbReference type="PDB" id="7YQ2">
    <property type="method" value="X-ray"/>
    <property type="resolution" value="1.90 A"/>
    <property type="chains" value="B/b=1-510"/>
</dbReference>
<dbReference type="PDB" id="7YQ7">
    <property type="method" value="X-ray"/>
    <property type="resolution" value="1.90 A"/>
    <property type="chains" value="B/b=1-510"/>
</dbReference>
<dbReference type="PDB" id="8EZ5">
    <property type="method" value="X-ray"/>
    <property type="resolution" value="2.09 A"/>
    <property type="chains" value="B/b=1-510"/>
</dbReference>
<dbReference type="PDB" id="8F4C">
    <property type="method" value="X-ray"/>
    <property type="resolution" value="2.00 A"/>
    <property type="chains" value="B/b=1-510"/>
</dbReference>
<dbReference type="PDB" id="8F4D">
    <property type="method" value="X-ray"/>
    <property type="resolution" value="2.15 A"/>
    <property type="chains" value="B/b=1-510"/>
</dbReference>
<dbReference type="PDB" id="8F4E">
    <property type="method" value="X-ray"/>
    <property type="resolution" value="2.09 A"/>
    <property type="chains" value="B/b=1-510"/>
</dbReference>
<dbReference type="PDB" id="8F4F">
    <property type="method" value="X-ray"/>
    <property type="resolution" value="2.03 A"/>
    <property type="chains" value="B/b=1-510"/>
</dbReference>
<dbReference type="PDB" id="8F4G">
    <property type="method" value="X-ray"/>
    <property type="resolution" value="2.03 A"/>
    <property type="chains" value="B/b=1-510"/>
</dbReference>
<dbReference type="PDB" id="8F4H">
    <property type="method" value="X-ray"/>
    <property type="resolution" value="2.10 A"/>
    <property type="chains" value="B/b=1-510"/>
</dbReference>
<dbReference type="PDB" id="8F4I">
    <property type="method" value="X-ray"/>
    <property type="resolution" value="2.00 A"/>
    <property type="chains" value="B/b=1-510"/>
</dbReference>
<dbReference type="PDB" id="8F4J">
    <property type="method" value="X-ray"/>
    <property type="resolution" value="2.00 A"/>
    <property type="chains" value="B/b=1-510"/>
</dbReference>
<dbReference type="PDB" id="8F4K">
    <property type="method" value="X-ray"/>
    <property type="resolution" value="2.16 A"/>
    <property type="chains" value="B/b=1-510"/>
</dbReference>
<dbReference type="PDB" id="9EVX">
    <property type="method" value="EM"/>
    <property type="resolution" value="1.71 A"/>
    <property type="chains" value="B/b=1-510"/>
</dbReference>
<dbReference type="PDBsum" id="1S5L"/>
<dbReference type="PDBsum" id="1W5C"/>
<dbReference type="PDBsum" id="2AXT"/>
<dbReference type="PDBsum" id="3KZI"/>
<dbReference type="PDBsum" id="4FBY"/>
<dbReference type="PDBsum" id="4IXQ"/>
<dbReference type="PDBsum" id="4IXR"/>
<dbReference type="PDBsum" id="4PBU"/>
<dbReference type="PDBsum" id="4PJ0"/>
<dbReference type="PDBsum" id="4RVY"/>
<dbReference type="PDBsum" id="4TNH"/>
<dbReference type="PDBsum" id="4TNI"/>
<dbReference type="PDBsum" id="4TNJ"/>
<dbReference type="PDBsum" id="4TNK"/>
<dbReference type="PDBsum" id="4V62"/>
<dbReference type="PDBsum" id="4V82"/>
<dbReference type="PDBsum" id="5E79"/>
<dbReference type="PDBsum" id="5E7C"/>
<dbReference type="PDBsum" id="5H2F"/>
<dbReference type="PDBsum" id="5KAF"/>
<dbReference type="PDBsum" id="5KAI"/>
<dbReference type="PDBsum" id="5MX2"/>
<dbReference type="PDBsum" id="5TIS"/>
<dbReference type="PDBsum" id="5ZZN"/>
<dbReference type="PDBsum" id="6DHE"/>
<dbReference type="PDBsum" id="6DHF"/>
<dbReference type="PDBsum" id="6DHG"/>
<dbReference type="PDBsum" id="6DHH"/>
<dbReference type="PDBsum" id="6DHO"/>
<dbReference type="PDBsum" id="6DHP"/>
<dbReference type="PDBsum" id="6W1O"/>
<dbReference type="PDBsum" id="6W1P"/>
<dbReference type="PDBsum" id="6W1Q"/>
<dbReference type="PDBsum" id="6W1R"/>
<dbReference type="PDBsum" id="6W1T"/>
<dbReference type="PDBsum" id="6W1U"/>
<dbReference type="PDBsum" id="6W1V"/>
<dbReference type="PDBsum" id="7NHO"/>
<dbReference type="PDBsum" id="7NHP"/>
<dbReference type="PDBsum" id="7NHQ"/>
<dbReference type="PDBsum" id="7RF1"/>
<dbReference type="PDBsum" id="7RF2"/>
<dbReference type="PDBsum" id="7RF3"/>
<dbReference type="PDBsum" id="7RF4"/>
<dbReference type="PDBsum" id="7RF5"/>
<dbReference type="PDBsum" id="7RF6"/>
<dbReference type="PDBsum" id="7RF7"/>
<dbReference type="PDBsum" id="7RF8"/>
<dbReference type="PDBsum" id="7YQ2"/>
<dbReference type="PDBsum" id="7YQ7"/>
<dbReference type="PDBsum" id="8EZ5"/>
<dbReference type="PDBsum" id="8F4C"/>
<dbReference type="PDBsum" id="8F4D"/>
<dbReference type="PDBsum" id="8F4E"/>
<dbReference type="PDBsum" id="8F4F"/>
<dbReference type="PDBsum" id="8F4G"/>
<dbReference type="PDBsum" id="8F4H"/>
<dbReference type="PDBsum" id="8F4I"/>
<dbReference type="PDBsum" id="8F4J"/>
<dbReference type="PDBsum" id="8F4K"/>
<dbReference type="PDBsum" id="9EVX"/>
<dbReference type="EMDB" id="EMD-12335"/>
<dbReference type="EMDB" id="EMD-12336"/>
<dbReference type="EMDB" id="EMD-12337"/>
<dbReference type="EMDB" id="EMD-50019"/>
<dbReference type="SMR" id="Q8DIQ1"/>
<dbReference type="DIP" id="DIP-48488N"/>
<dbReference type="IntAct" id="Q8DIQ1">
    <property type="interactions" value="1"/>
</dbReference>
<dbReference type="STRING" id="197221.gene:10748130"/>
<dbReference type="EnsemblBacteria" id="BAC09082">
    <property type="protein sequence ID" value="BAC09082"/>
    <property type="gene ID" value="BAC09082"/>
</dbReference>
<dbReference type="KEGG" id="tel:tlr1530"/>
<dbReference type="PATRIC" id="fig|197221.4.peg.1607"/>
<dbReference type="eggNOG" id="ENOG502Z7TN">
    <property type="taxonomic scope" value="Bacteria"/>
</dbReference>
<dbReference type="EvolutionaryTrace" id="Q8DIQ1"/>
<dbReference type="Proteomes" id="UP000000440">
    <property type="component" value="Chromosome"/>
</dbReference>
<dbReference type="GO" id="GO:0009523">
    <property type="term" value="C:photosystem II"/>
    <property type="evidence" value="ECO:0007669"/>
    <property type="project" value="UniProtKB-KW"/>
</dbReference>
<dbReference type="GO" id="GO:0031676">
    <property type="term" value="C:plasma membrane-derived thylakoid membrane"/>
    <property type="evidence" value="ECO:0007669"/>
    <property type="project" value="UniProtKB-SubCell"/>
</dbReference>
<dbReference type="GO" id="GO:0016168">
    <property type="term" value="F:chlorophyll binding"/>
    <property type="evidence" value="ECO:0007669"/>
    <property type="project" value="UniProtKB-UniRule"/>
</dbReference>
<dbReference type="GO" id="GO:0045156">
    <property type="term" value="F:electron transporter, transferring electrons within the cyclic electron transport pathway of photosynthesis activity"/>
    <property type="evidence" value="ECO:0007669"/>
    <property type="project" value="InterPro"/>
</dbReference>
<dbReference type="GO" id="GO:0009772">
    <property type="term" value="P:photosynthetic electron transport in photosystem II"/>
    <property type="evidence" value="ECO:0007669"/>
    <property type="project" value="InterPro"/>
</dbReference>
<dbReference type="Gene3D" id="3.10.680.10">
    <property type="entry name" value="Photosystem II CP47 reaction center protein"/>
    <property type="match status" value="1"/>
</dbReference>
<dbReference type="HAMAP" id="MF_01495">
    <property type="entry name" value="PSII_PsbB_CP47"/>
    <property type="match status" value="1"/>
</dbReference>
<dbReference type="InterPro" id="IPR000932">
    <property type="entry name" value="PS_antenna-like"/>
</dbReference>
<dbReference type="InterPro" id="IPR036001">
    <property type="entry name" value="PS_II_antenna-like_sf"/>
</dbReference>
<dbReference type="InterPro" id="IPR017486">
    <property type="entry name" value="PSII_PsbB"/>
</dbReference>
<dbReference type="NCBIfam" id="TIGR03039">
    <property type="entry name" value="PS_II_CP47"/>
    <property type="match status" value="1"/>
</dbReference>
<dbReference type="Pfam" id="PF00421">
    <property type="entry name" value="PSII"/>
    <property type="match status" value="1"/>
</dbReference>
<dbReference type="SUPFAM" id="SSF161077">
    <property type="entry name" value="Photosystem II antenna protein-like"/>
    <property type="match status" value="1"/>
</dbReference>
<comment type="function">
    <text evidence="1 5 6 9">One of the components of the core complex of photosystem II (PSII). It binds chlorophyll and helps catalyze the primary light-induced photochemical processes of PSII. PSII is a light-driven water:plastoquinone oxidoreductase, using light energy to abstract electrons from H(2)O, generating O(2) and a proton gradient subsequently used for ATP formation.</text>
</comment>
<comment type="cofactor">
    <text evidence="1 2 3 4 5 6 7 8 9 10 12">Binds multiple chlorophylls. PSII binds additional chlorophylls, carotenoids and specific lipids.</text>
</comment>
<comment type="subunit">
    <text evidence="1 2 3 4 5 6 7 8 9 10 11 12">PSII is composed of 1 copy each of membrane proteins PsbA, PsbB, PsbC, PsbD, PsbE, PsbF, PsbH, PsbI, PsbJ, PsbK, PsbL, PsbM, PsbT, PsbX, PsbY, PsbZ, Psb30/Ycf12, peripheral proteins PsbO, CyanoQ (PsbQ), PsbU, PsbV and a large number of cofactors. It forms dimeric complexes. Part of a photosystem II (PSII) assembly intermediate complex PSII-I; crystallized from a strain deleted of psbJ, it forms monomeric PSII before addition of the oxygen evolving complex. PSII-I includes 3 assembly factors not found in mature PSII (Psb27, Psb28 and Psb34) (PubMed:33846594).</text>
</comment>
<comment type="subcellular location">
    <subcellularLocation>
        <location evidence="1 2 3 4 5 6 7 8 9 10 11 12">Cellular thylakoid membrane</location>
        <topology evidence="1 2 3 4 5 6 7 8 9 10 11 12">Multi-pass membrane protein</topology>
    </subcellularLocation>
</comment>
<comment type="mass spectrometry"/>
<comment type="similarity">
    <text evidence="1 13">Belongs to the PsbB/PsbC family. PsbB subfamily.</text>
</comment>
<reference key="1">
    <citation type="journal article" date="2004" name="Plant Cell Physiol.">
        <title>PSII-Tc protein plays an important role in dimerization of photosystem II.</title>
        <authorList>
            <person name="Iwai M."/>
            <person name="Katoh H."/>
            <person name="Katayama M."/>
            <person name="Ikeuchi M."/>
        </authorList>
    </citation>
    <scope>NUCLEOTIDE SEQUENCE [GENOMIC DNA]</scope>
    <source>
        <strain>NIES-2133 / IAM M-273 / BP-1</strain>
    </source>
</reference>
<reference key="2">
    <citation type="journal article" date="2002" name="DNA Res.">
        <title>Complete genome structure of the thermophilic cyanobacterium Thermosynechococcus elongatus BP-1.</title>
        <authorList>
            <person name="Nakamura Y."/>
            <person name="Kaneko T."/>
            <person name="Sato S."/>
            <person name="Ikeuchi M."/>
            <person name="Katoh H."/>
            <person name="Sasamoto S."/>
            <person name="Watanabe A."/>
            <person name="Iriguchi M."/>
            <person name="Kawashima K."/>
            <person name="Kimura T."/>
            <person name="Kishida Y."/>
            <person name="Kiyokawa C."/>
            <person name="Kohara M."/>
            <person name="Matsumoto M."/>
            <person name="Matsuno A."/>
            <person name="Nakazaki N."/>
            <person name="Shimpo S."/>
            <person name="Sugimoto M."/>
            <person name="Takeuchi C."/>
            <person name="Yamada M."/>
            <person name="Tabata S."/>
        </authorList>
    </citation>
    <scope>NUCLEOTIDE SEQUENCE [LARGE SCALE GENOMIC DNA]</scope>
    <source>
        <strain>NIES-2133 / IAM M-273 / BP-1</strain>
    </source>
</reference>
<reference key="3">
    <citation type="journal article" date="2004" name="Phys. Chem. Chem. Phys.">
        <title>Crystal structure of cyanobacterial photosystem II at 3.2 A resolution: a closer look at the Mn-cluster.</title>
        <authorList>
            <person name="Biesiadka J."/>
            <person name="Loll B."/>
            <person name="Kern J."/>
            <person name="Irrgang K.-D."/>
            <person name="Zouni A."/>
        </authorList>
    </citation>
    <scope>X-RAY CRYSTALLOGRAPHY (3.20 ANGSTROMS) OF 1-510 IN PHOTOSYSTEM II</scope>
    <scope>COFACTOR</scope>
    <scope>SUBUNIT</scope>
    <scope>SUBCELLULAR LOCATION</scope>
</reference>
<reference key="4">
    <citation type="journal article" date="2004" name="Science">
        <title>Architecture of the photosynthetic oxygen-evolving center.</title>
        <authorList>
            <person name="Ferreira K.N."/>
            <person name="Iverson T.M."/>
            <person name="Maghlaoui K."/>
            <person name="Barber J."/>
            <person name="Iwata S."/>
        </authorList>
    </citation>
    <scope>X-RAY CRYSTALLOGRAPHY (3.50 ANGSTROMS) IN PHOTOSYSTEM II</scope>
    <scope>COFACTOR</scope>
    <scope>SUBUNIT</scope>
    <scope>SUBCELLULAR LOCATION</scope>
</reference>
<reference key="5">
    <citation type="journal article" date="2005" name="Nature">
        <title>Towards complete cofactor arrangement in the 3.0 A resolution structure of photosystem II.</title>
        <authorList>
            <person name="Loll B."/>
            <person name="Kern J."/>
            <person name="Saenger W."/>
            <person name="Zouni A."/>
            <person name="Biesiadka J."/>
        </authorList>
    </citation>
    <scope>X-RAY CRYSTALLOGRAPHY (3.00 ANGSTROMS) OF 2-461 IN PHOTOSYSTEM II</scope>
    <scope>COFACTOR</scope>
    <scope>SUBUNIT</scope>
    <scope>SUBCELLULAR LOCATION</scope>
    <source>
        <strain>NIES-2133 / IAM M-273 / BP-1</strain>
    </source>
</reference>
<reference key="6">
    <citation type="journal article" date="2009" name="Nat. Struct. Mol. Biol.">
        <title>Cyanobacterial photosystem II at 2.9-A resolution and the role of quinones, lipids, channels and chloride.</title>
        <authorList>
            <person name="Guskov A."/>
            <person name="Kern J."/>
            <person name="Gabdulkhakov A."/>
            <person name="Broser M."/>
            <person name="Zouni A."/>
            <person name="Saenger W."/>
        </authorList>
    </citation>
    <scope>X-RAY CRYSTALLOGRAPHY (2.90 ANGSTROMS) IN PHOTOSYSTEM II</scope>
    <scope>COFACTOR</scope>
    <scope>SUBUNIT</scope>
    <scope>SUBCELLULAR LOCATION</scope>
    <scope>MASS SPECTROMETRY</scope>
    <source>
        <strain>NIES-2133 / IAM M-273 / BP-1</strain>
    </source>
</reference>
<reference key="7">
    <citation type="journal article" date="2010" name="J. Biol. Chem.">
        <title>Crystal structure of monomeric photosystem II from Thermosynechococcus elongatus at 3.6 A resolution.</title>
        <authorList>
            <person name="Broser M."/>
            <person name="Gabdulkhakov A."/>
            <person name="Kern J."/>
            <person name="Guskov A."/>
            <person name="Muh F."/>
            <person name="Saenger W."/>
            <person name="Zouni A."/>
        </authorList>
    </citation>
    <scope>X-RAY CRYSTALLOGRAPHY (3.60 ANGSTROMS) IN PHOTOSYSTEM II</scope>
    <scope>FUNCTION</scope>
    <scope>COFACTOR</scope>
    <scope>SUBUNIT</scope>
    <scope>SUBCELLULAR LOCATION</scope>
    <source>
        <strain>NIES-2133 / IAM M-273 / BP-1</strain>
    </source>
</reference>
<reference key="8">
    <citation type="journal article" date="2011" name="J. Biol. Chem.">
        <title>Structural basis of cyanobacterial photosystem II inhibition by the herbicide terbutryn.</title>
        <authorList>
            <person name="Broser M."/>
            <person name="Glockner C."/>
            <person name="Gabdulkhakov A."/>
            <person name="Guskov A."/>
            <person name="Buchta J."/>
            <person name="Kern J."/>
            <person name="Muh F."/>
            <person name="Dau H."/>
            <person name="Saenger W."/>
            <person name="Zouni A."/>
        </authorList>
    </citation>
    <scope>X-RAY CRYSTALLOGRAPHY (3.20 ANGSTROMS) IN PHOTOSYSTEM II</scope>
    <scope>FUNCTION</scope>
    <scope>COFACTOR</scope>
    <scope>SUBUNIT</scope>
    <scope>SUBCELLULAR LOCATION</scope>
    <source>
        <strain>NIES-2133 / IAM M-273 / BP-1</strain>
    </source>
</reference>
<reference key="9">
    <citation type="journal article" date="2012" name="Proc. Natl. Acad. Sci. U.S.A.">
        <title>Room temperature femtosecond X-ray diffraction of photosystem II microcrystals.</title>
        <authorList>
            <person name="Kern J."/>
            <person name="Alonso-Mori R."/>
            <person name="Hellmich J."/>
            <person name="Tran R."/>
            <person name="Hattne J."/>
            <person name="Laksmono H."/>
            <person name="Glockner C."/>
            <person name="Echols N."/>
            <person name="Sierra R.G."/>
            <person name="Sellberg J."/>
            <person name="Lassalle-Kaiser B."/>
            <person name="Gildea R.J."/>
            <person name="Glatzel P."/>
            <person name="Grosse-Kunstleve R.W."/>
            <person name="Latimer M.J."/>
            <person name="McQueen T.A."/>
            <person name="DiFiore D."/>
            <person name="Fry A.R."/>
            <person name="Messerschmidt M."/>
            <person name="Miahnahri A."/>
            <person name="Schafer D.W."/>
            <person name="Seibert M.M."/>
            <person name="Sokaras D."/>
            <person name="Weng T.C."/>
            <person name="Zwart P.H."/>
            <person name="White W.E."/>
            <person name="Adams P.D."/>
            <person name="Bogan M.J."/>
            <person name="Boutet S."/>
            <person name="Williams G.J."/>
            <person name="Messinger J."/>
            <person name="Sauter N.K."/>
            <person name="Zouni A."/>
            <person name="Bergmann U."/>
            <person name="Yano J."/>
            <person name="Yachandra V.K."/>
        </authorList>
    </citation>
    <scope>X-RAY CRYSTALLOGRAPHY (6.56 ANGSTROMS) IN PHOTOSYSTEM II</scope>
    <scope>COFACTOR</scope>
    <scope>SUBUNIT</scope>
    <scope>SUBCELLULAR LOCATION</scope>
    <source>
        <strain>NIES-2133 / IAM M-273 / BP-1</strain>
    </source>
</reference>
<reference key="10">
    <citation type="journal article" date="2013" name="Science">
        <title>Simultaneous femtosecond X-ray spectroscopy and diffraction of photosystem II at room temperature.</title>
        <authorList>
            <person name="Kern J."/>
            <person name="Alonso-Mori R."/>
            <person name="Tran R."/>
            <person name="Hattne J."/>
            <person name="Gildea R.J."/>
            <person name="Echols N."/>
            <person name="Glockner C."/>
            <person name="Hellmich J."/>
            <person name="Laksmono H."/>
            <person name="Sierra R.G."/>
            <person name="Lassalle-Kaiser B."/>
            <person name="Koroidov S."/>
            <person name="Lampe A."/>
            <person name="Han G."/>
            <person name="Gul S."/>
            <person name="Difiore D."/>
            <person name="Milathianaki D."/>
            <person name="Fry A.R."/>
            <person name="Miahnahri A."/>
            <person name="Schafer D.W."/>
            <person name="Messerschmidt M."/>
            <person name="Seibert M.M."/>
            <person name="Koglin J.E."/>
            <person name="Sokaras D."/>
            <person name="Weng T.C."/>
            <person name="Sellberg J."/>
            <person name="Latimer M.J."/>
            <person name="Grosse-Kunstleve R.W."/>
            <person name="Zwart P.H."/>
            <person name="White W.E."/>
            <person name="Glatzel P."/>
            <person name="Adams P.D."/>
            <person name="Bogan M.J."/>
            <person name="Williams G.J."/>
            <person name="Boutet S."/>
            <person name="Messinger J."/>
            <person name="Zouni A."/>
            <person name="Sauter N.K."/>
            <person name="Yachandra V.K."/>
            <person name="Bergmann U."/>
            <person name="Yano J."/>
        </authorList>
    </citation>
    <scope>X-RAY CRYSTALLOGRAPHY (5.70 ANGSTROMS) IN PHOTOSYSTEM II</scope>
    <scope>COFACTOR</scope>
    <scope>SUBUNIT</scope>
    <scope>SUBCELLULAR LOCATION</scope>
    <source>
        <strain>NIES-2133 / IAM M-273 / BP-1</strain>
    </source>
</reference>
<reference key="11">
    <citation type="journal article" date="2014" name="Nature">
        <title>Serial time-resolved crystallography of photosystem II using a femtosecond X-ray laser.</title>
        <authorList>
            <person name="Kupitz C."/>
            <person name="Basu S."/>
            <person name="Grotjohann I."/>
            <person name="Fromme R."/>
            <person name="Zatsepin N.A."/>
            <person name="Rendek K.N."/>
            <person name="Hunter M.S."/>
            <person name="Shoeman R.L."/>
            <person name="White T.A."/>
            <person name="Wang D."/>
            <person name="James D."/>
            <person name="Yang J.H."/>
            <person name="Cobb D.E."/>
            <person name="Reeder B."/>
            <person name="Sierra R.G."/>
            <person name="Liu H."/>
            <person name="Barty A."/>
            <person name="Aquila A.L."/>
            <person name="Deponte D."/>
            <person name="Kirian R.A."/>
            <person name="Bari S."/>
            <person name="Bergkamp J.J."/>
            <person name="Beyerlein K.R."/>
            <person name="Bogan M.J."/>
            <person name="Caleman C."/>
            <person name="Chao T.C."/>
            <person name="Conrad C.E."/>
            <person name="Davis K.M."/>
            <person name="Fleckenstein H."/>
            <person name="Galli L."/>
            <person name="Hau-Riege S.P."/>
            <person name="Kassemeyer S."/>
            <person name="Laksmono H."/>
            <person name="Liang M."/>
            <person name="Lomb L."/>
            <person name="Marchesini S."/>
            <person name="Martin A.V."/>
            <person name="Messerschmidt M."/>
            <person name="Milathianaki D."/>
            <person name="Nass K."/>
            <person name="Ros A."/>
            <person name="Roy-Chowdhury S."/>
            <person name="Schmidt K."/>
            <person name="Seibert M."/>
            <person name="Steinbrener J."/>
            <person name="Stellato F."/>
            <person name="Yan L."/>
            <person name="Yoon C."/>
            <person name="Moore T.A."/>
            <person name="Moore A.L."/>
            <person name="Pushkar Y."/>
            <person name="Williams G.J."/>
            <person name="Boutet S."/>
            <person name="Doak R.B."/>
            <person name="Weierstall U."/>
            <person name="Frank M."/>
            <person name="Chapman H.N."/>
            <person name="Spence J.C."/>
            <person name="Fromme P."/>
        </authorList>
    </citation>
    <scope>X-RAY CRYSTALLOGRAPHY (5.00 ANGSTROMS) OF 2-505 IN PHOTOSYSTEM II</scope>
    <scope>COFACTOR</scope>
    <scope>SUBUNIT</scope>
    <scope>SUBCELLULAR LOCATION</scope>
    <source>
        <strain>NIES-2133 / IAM M-273 / BP-1</strain>
    </source>
</reference>
<reference key="12">
    <citation type="journal article" date="2014" name="Nat. Commun.">
        <title>Taking snapshots of photosynthetic water oxidation using femtosecond X-ray diffraction and spectroscopy.</title>
        <authorList>
            <person name="Kern J."/>
            <person name="Tran R."/>
            <person name="Alonso-Mori R."/>
            <person name="Koroidov S."/>
            <person name="Echols N."/>
            <person name="Hattne J."/>
            <person name="Ibrahim M."/>
            <person name="Gul S."/>
            <person name="Laksmono H."/>
            <person name="Sierra R.G."/>
            <person name="Gildea R.J."/>
            <person name="Han G."/>
            <person name="Hellmich J."/>
            <person name="Lassalle-Kaiser B."/>
            <person name="Chatterjee R."/>
            <person name="Brewster A.S."/>
            <person name="Stan C.A."/>
            <person name="Gloeckner C."/>
            <person name="Lampe A."/>
            <person name="DiFiore D."/>
            <person name="Milathianaki D."/>
            <person name="Fry A.R."/>
            <person name="Seibert M.M."/>
            <person name="Koglin J.E."/>
            <person name="Gallo E."/>
            <person name="Uhlig J."/>
            <person name="Sokaras D."/>
            <person name="Weng T.C."/>
            <person name="Zwart P.H."/>
            <person name="Skinner D.E."/>
            <person name="Bogan M.J."/>
            <person name="Messerschmidt M."/>
            <person name="Glatzel P."/>
            <person name="Williams G.J."/>
            <person name="Boutet S."/>
            <person name="Adams P.D."/>
            <person name="Zouni A."/>
            <person name="Messinger J."/>
            <person name="Sauter N.K."/>
            <person name="Bergmann U."/>
            <person name="Yano J."/>
            <person name="Yachandra V.K."/>
        </authorList>
    </citation>
    <scope>X-RAY CRYSTALLOGRAPHY (4.50 ANGSTROMS) IN PHOTOSYSTEM II</scope>
    <scope>FUNCTION</scope>
    <scope>COFACTOR</scope>
    <scope>SUBUNIT</scope>
    <scope>SUBCELLULAR LOCATION</scope>
    <source>
        <strain>NIES-2133 / IAM M-273 / BP-1</strain>
    </source>
</reference>
<reference evidence="15 16 17" key="13">
    <citation type="journal article" date="2021" name="Nat. Plants">
        <title>Structural insights into photosystem II assembly.</title>
        <authorList>
            <person name="Zabret J."/>
            <person name="Bohn S."/>
            <person name="Schuller S.K."/>
            <person name="Arnolds O."/>
            <person name="Moller M."/>
            <person name="Meier-Credo J."/>
            <person name="Liauw P."/>
            <person name="Chan A."/>
            <person name="Tajkhorshid E."/>
            <person name="Langer J.D."/>
            <person name="Stoll R."/>
            <person name="Krieger-Liszkay A."/>
            <person name="Engel B.D."/>
            <person name="Rudack T."/>
            <person name="Schuller J.M."/>
            <person name="Nowaczyk M.M."/>
        </authorList>
    </citation>
    <scope>STRUCTURE BY ELECTRON MICROSCOPY (2.68 ANGSTROMS) IN PSII-I ASSEMBLY COMPLEX</scope>
    <scope>SUBUNIT</scope>
    <scope>SUBCELLULAR LOCATION</scope>
    <scope>TOPOLOGY</scope>
    <source>
        <strain>NIES-2133 / IAM M-273 / BP-1</strain>
    </source>
</reference>
<organism>
    <name type="scientific">Thermosynechococcus vestitus (strain NIES-2133 / IAM M-273 / BP-1)</name>
    <dbReference type="NCBI Taxonomy" id="197221"/>
    <lineage>
        <taxon>Bacteria</taxon>
        <taxon>Bacillati</taxon>
        <taxon>Cyanobacteriota</taxon>
        <taxon>Cyanophyceae</taxon>
        <taxon>Acaryochloridales</taxon>
        <taxon>Thermosynechococcaceae</taxon>
        <taxon>Thermosynechococcus</taxon>
    </lineage>
</organism>
<proteinExistence type="evidence at protein level"/>
<keyword id="KW-0002">3D-structure</keyword>
<keyword id="KW-0148">Chlorophyll</keyword>
<keyword id="KW-0157">Chromophore</keyword>
<keyword id="KW-0472">Membrane</keyword>
<keyword id="KW-0602">Photosynthesis</keyword>
<keyword id="KW-0604">Photosystem II</keyword>
<keyword id="KW-1185">Reference proteome</keyword>
<keyword id="KW-0793">Thylakoid</keyword>
<keyword id="KW-0812">Transmembrane</keyword>
<keyword id="KW-1133">Transmembrane helix</keyword>
<gene>
    <name evidence="1" type="primary">psbB</name>
    <name type="ordered locus">tlr1530</name>
</gene>
<sequence>MGLPWYRVHTVLINDPGRLIAAHLMHTALVAGWAGSMALYELATFDPSDPVLNPMWRQGMFVLPFMARLGVTGSWSGWSITGETGIDPGFWSFEGVALAHIVLSGLLFLAACWHWVYWDLELFRDPRTGEPALDLPKMFGIHLFLAGLLCFGFGAFHLTGLFGPGMWVSDPYGLTGSVQPVAPEWGPDGFNPYNPGGVVAHHIAAGIVGIIAGLFHILVRPPQRLYKALRMGNIETVLSSSIAAVFFAAFVVAGTMWYGSATTPIELFGPTRYQWDSSYFQQEINRRVQASLASGATLEEAWSAIPEKLAFYDYIGNNPAKGGLFRTGPMNKGDGIAQAWKGHAVFRNKEGEELFVRRMPAFFESFPVILTDKNGVVKADIPFRRAESKYSFEQQGVTVSFYGGELNGQTFTDPPTVKSYARKAIFGEIFEFDTETLNSDGIFRTSPRGWFTFAHAVFALLFFFGHIWHGARTLFRDVFSGIDPELSPEQVEWGFYQKVGDVTTRRKEAV</sequence>
<protein>
    <recommendedName>
        <fullName evidence="1">Photosystem II CP47 reaction center protein</fullName>
    </recommendedName>
    <alternativeName>
        <fullName evidence="1">PSII 47 kDa protein</fullName>
    </alternativeName>
    <alternativeName>
        <fullName evidence="1">Protein CP-47</fullName>
    </alternativeName>
</protein>
<name>PSBB_THEVB</name>
<feature type="initiator methionine" description="Removed" evidence="4">
    <location>
        <position position="1"/>
    </location>
</feature>
<feature type="chain" id="PRO_0000430806" description="Photosystem II CP47 reaction center protein">
    <location>
        <begin position="2"/>
        <end position="510"/>
    </location>
</feature>
<feature type="topological domain" description="Cytoplasmic" evidence="11 14">
    <location>
        <begin position="2"/>
        <end position="16"/>
    </location>
</feature>
<feature type="transmembrane region" description="Helical" evidence="11 14">
    <location>
        <begin position="17"/>
        <end position="37"/>
    </location>
</feature>
<feature type="topological domain" description="Lumenal" evidence="11 14">
    <location>
        <begin position="38"/>
        <end position="94"/>
    </location>
</feature>
<feature type="transmembrane region" description="Helical" evidence="11 14">
    <location>
        <begin position="95"/>
        <end position="116"/>
    </location>
</feature>
<feature type="topological domain" description="Cytoplasmic" evidence="11 14">
    <location>
        <begin position="117"/>
        <end position="134"/>
    </location>
</feature>
<feature type="transmembrane region" description="Helical" evidence="11 14">
    <location>
        <begin position="135"/>
        <end position="157"/>
    </location>
</feature>
<feature type="topological domain" description="Lumenal" evidence="11 14">
    <location>
        <begin position="158"/>
        <end position="196"/>
    </location>
</feature>
<feature type="transmembrane region" description="Helical" evidence="11 14">
    <location>
        <begin position="197"/>
        <end position="218"/>
    </location>
</feature>
<feature type="topological domain" description="Cytoplasmic" evidence="11 14">
    <location>
        <begin position="219"/>
        <end position="233"/>
    </location>
</feature>
<feature type="transmembrane region" description="Helical" evidence="11 14">
    <location>
        <begin position="234"/>
        <end position="254"/>
    </location>
</feature>
<feature type="topological domain" description="Lumenal" evidence="11 14">
    <location>
        <begin position="255"/>
        <end position="450"/>
    </location>
</feature>
<feature type="transmembrane region" description="Helical" evidence="11 14">
    <location>
        <begin position="451"/>
        <end position="473"/>
    </location>
</feature>
<feature type="topological domain" description="Cytoplasmic" evidence="11 14">
    <location>
        <begin position="474"/>
        <end position="510"/>
    </location>
</feature>
<feature type="helix" evidence="24">
    <location>
        <begin position="5"/>
        <end position="12"/>
    </location>
</feature>
<feature type="helix" evidence="24">
    <location>
        <begin position="16"/>
        <end position="44"/>
    </location>
</feature>
<feature type="turn" evidence="24">
    <location>
        <begin position="50"/>
        <end position="52"/>
    </location>
</feature>
<feature type="helix" evidence="24">
    <location>
        <begin position="55"/>
        <end position="57"/>
    </location>
</feature>
<feature type="helix" evidence="24">
    <location>
        <begin position="63"/>
        <end position="68"/>
    </location>
</feature>
<feature type="strand" evidence="25">
    <location>
        <begin position="77"/>
        <end position="79"/>
    </location>
</feature>
<feature type="strand" evidence="22">
    <location>
        <begin position="80"/>
        <end position="82"/>
    </location>
</feature>
<feature type="strand" evidence="18">
    <location>
        <begin position="90"/>
        <end position="92"/>
    </location>
</feature>
<feature type="helix" evidence="24">
    <location>
        <begin position="93"/>
        <end position="116"/>
    </location>
</feature>
<feature type="helix" evidence="24">
    <location>
        <begin position="121"/>
        <end position="123"/>
    </location>
</feature>
<feature type="turn" evidence="24">
    <location>
        <begin position="126"/>
        <end position="128"/>
    </location>
</feature>
<feature type="strand" evidence="23">
    <location>
        <begin position="129"/>
        <end position="131"/>
    </location>
</feature>
<feature type="helix" evidence="24">
    <location>
        <begin position="135"/>
        <end position="155"/>
    </location>
</feature>
<feature type="turn" evidence="24">
    <location>
        <begin position="156"/>
        <end position="159"/>
    </location>
</feature>
<feature type="strand" evidence="21">
    <location>
        <begin position="160"/>
        <end position="163"/>
    </location>
</feature>
<feature type="strand" evidence="24">
    <location>
        <begin position="166"/>
        <end position="168"/>
    </location>
</feature>
<feature type="strand" evidence="24">
    <location>
        <begin position="173"/>
        <end position="175"/>
    </location>
</feature>
<feature type="strand" evidence="24">
    <location>
        <begin position="177"/>
        <end position="179"/>
    </location>
</feature>
<feature type="helix" evidence="24">
    <location>
        <begin position="187"/>
        <end position="190"/>
    </location>
</feature>
<feature type="strand" evidence="19">
    <location>
        <begin position="192"/>
        <end position="194"/>
    </location>
</feature>
<feature type="helix" evidence="24">
    <location>
        <begin position="195"/>
        <end position="218"/>
    </location>
</feature>
<feature type="helix" evidence="24">
    <location>
        <begin position="223"/>
        <end position="228"/>
    </location>
</feature>
<feature type="turn" evidence="24">
    <location>
        <begin position="229"/>
        <end position="232"/>
    </location>
</feature>
<feature type="helix" evidence="24">
    <location>
        <begin position="234"/>
        <end position="258"/>
    </location>
</feature>
<feature type="strand" evidence="23">
    <location>
        <begin position="261"/>
        <end position="263"/>
    </location>
</feature>
<feature type="helix" evidence="24">
    <location>
        <begin position="265"/>
        <end position="268"/>
    </location>
</feature>
<feature type="helix" evidence="24">
    <location>
        <begin position="272"/>
        <end position="276"/>
    </location>
</feature>
<feature type="helix" evidence="24">
    <location>
        <begin position="279"/>
        <end position="293"/>
    </location>
</feature>
<feature type="helix" evidence="24">
    <location>
        <begin position="298"/>
        <end position="303"/>
    </location>
</feature>
<feature type="helix" evidence="24">
    <location>
        <begin position="307"/>
        <end position="312"/>
    </location>
</feature>
<feature type="helix" evidence="24">
    <location>
        <begin position="315"/>
        <end position="317"/>
    </location>
</feature>
<feature type="helix" evidence="25">
    <location>
        <begin position="319"/>
        <end position="321"/>
    </location>
</feature>
<feature type="strand" evidence="23">
    <location>
        <begin position="323"/>
        <end position="325"/>
    </location>
</feature>
<feature type="helix" evidence="24">
    <location>
        <begin position="330"/>
        <end position="332"/>
    </location>
</feature>
<feature type="strand" evidence="24">
    <location>
        <begin position="336"/>
        <end position="347"/>
    </location>
</feature>
<feature type="strand" evidence="22">
    <location>
        <begin position="349"/>
        <end position="351"/>
    </location>
</feature>
<feature type="strand" evidence="24">
    <location>
        <begin position="353"/>
        <end position="356"/>
    </location>
</feature>
<feature type="strand" evidence="24">
    <location>
        <begin position="369"/>
        <end position="371"/>
    </location>
</feature>
<feature type="strand" evidence="22">
    <location>
        <begin position="373"/>
        <end position="375"/>
    </location>
</feature>
<feature type="strand" evidence="24">
    <location>
        <begin position="377"/>
        <end position="380"/>
    </location>
</feature>
<feature type="strand" evidence="22">
    <location>
        <begin position="383"/>
        <end position="386"/>
    </location>
</feature>
<feature type="strand" evidence="24">
    <location>
        <begin position="389"/>
        <end position="391"/>
    </location>
</feature>
<feature type="helix" evidence="24">
    <location>
        <begin position="392"/>
        <end position="395"/>
    </location>
</feature>
<feature type="strand" evidence="24">
    <location>
        <begin position="398"/>
        <end position="404"/>
    </location>
</feature>
<feature type="turn" evidence="24">
    <location>
        <begin position="405"/>
        <end position="408"/>
    </location>
</feature>
<feature type="strand" evidence="20">
    <location>
        <begin position="409"/>
        <end position="411"/>
    </location>
</feature>
<feature type="helix" evidence="24">
    <location>
        <begin position="414"/>
        <end position="424"/>
    </location>
</feature>
<feature type="strand" evidence="24">
    <location>
        <begin position="427"/>
        <end position="433"/>
    </location>
</feature>
<feature type="turn" evidence="24">
    <location>
        <begin position="435"/>
        <end position="438"/>
    </location>
</feature>
<feature type="helix" evidence="24">
    <location>
        <begin position="447"/>
        <end position="474"/>
    </location>
</feature>
<feature type="helix" evidence="24">
    <location>
        <begin position="476"/>
        <end position="478"/>
    </location>
</feature>
<feature type="strand" evidence="23">
    <location>
        <begin position="480"/>
        <end position="482"/>
    </location>
</feature>
<feature type="helix" evidence="24">
    <location>
        <begin position="488"/>
        <end position="490"/>
    </location>
</feature>
<feature type="strand" evidence="24">
    <location>
        <begin position="492"/>
        <end position="498"/>
    </location>
</feature>
<feature type="helix" evidence="24">
    <location>
        <begin position="502"/>
        <end position="504"/>
    </location>
</feature>
<evidence type="ECO:0000255" key="1">
    <source>
        <dbReference type="HAMAP-Rule" id="MF_01495"/>
    </source>
</evidence>
<evidence type="ECO:0000269" key="2">
    <source>
    </source>
</evidence>
<evidence type="ECO:0000269" key="3">
    <source>
    </source>
</evidence>
<evidence type="ECO:0000269" key="4">
    <source>
    </source>
</evidence>
<evidence type="ECO:0000269" key="5">
    <source>
    </source>
</evidence>
<evidence type="ECO:0000269" key="6">
    <source>
    </source>
</evidence>
<evidence type="ECO:0000269" key="7">
    <source>
    </source>
</evidence>
<evidence type="ECO:0000269" key="8">
    <source>
    </source>
</evidence>
<evidence type="ECO:0000269" key="9">
    <source>
    </source>
</evidence>
<evidence type="ECO:0000269" key="10">
    <source>
    </source>
</evidence>
<evidence type="ECO:0000269" key="11">
    <source>
    </source>
</evidence>
<evidence type="ECO:0000269" key="12">
    <source ref="3"/>
</evidence>
<evidence type="ECO:0000305" key="13"/>
<evidence type="ECO:0000312" key="14">
    <source>
        <dbReference type="PDB" id="7NHQ"/>
    </source>
</evidence>
<evidence type="ECO:0007744" key="15">
    <source>
        <dbReference type="PDB" id="7NHO"/>
    </source>
</evidence>
<evidence type="ECO:0007744" key="16">
    <source>
        <dbReference type="PDB" id="7NHP"/>
    </source>
</evidence>
<evidence type="ECO:0007744" key="17">
    <source>
        <dbReference type="PDB" id="7NHQ"/>
    </source>
</evidence>
<evidence type="ECO:0007829" key="18">
    <source>
        <dbReference type="PDB" id="1S5L"/>
    </source>
</evidence>
<evidence type="ECO:0007829" key="19">
    <source>
        <dbReference type="PDB" id="1W5C"/>
    </source>
</evidence>
<evidence type="ECO:0007829" key="20">
    <source>
        <dbReference type="PDB" id="4PJ0"/>
    </source>
</evidence>
<evidence type="ECO:0007829" key="21">
    <source>
        <dbReference type="PDB" id="5TIS"/>
    </source>
</evidence>
<evidence type="ECO:0007829" key="22">
    <source>
        <dbReference type="PDB" id="7NHO"/>
    </source>
</evidence>
<evidence type="ECO:0007829" key="23">
    <source>
        <dbReference type="PDB" id="7NHQ"/>
    </source>
</evidence>
<evidence type="ECO:0007829" key="24">
    <source>
        <dbReference type="PDB" id="7YQ2"/>
    </source>
</evidence>
<evidence type="ECO:0007829" key="25">
    <source>
        <dbReference type="PDB" id="8F4C"/>
    </source>
</evidence>